<gene>
    <name evidence="1" type="primary">kdsB</name>
    <name type="ordered locus">Shew_1856</name>
</gene>
<sequence>MNVTLLIPARYGSSRFPGKPLAPINGKPMIQHVYERAALAKGLTAIYVATDDLRIKEAVEAFGGKVVMTDANAASGTDRIEDAITQLGLADDDLVINLQGDQPLIDPISIEQIITLFERHPGEFGMATLGYEITEEHELNDPKHVKMVFDNQFNALYFSRARIPFGRDTDDYPVYKHLGVYAYTREFVRTFNKLPLGRLEDLEKLEQLRALEHGHTIKVAISAFDSPEVDTPEDIRICEARLAVD</sequence>
<keyword id="KW-0963">Cytoplasm</keyword>
<keyword id="KW-0448">Lipopolysaccharide biosynthesis</keyword>
<keyword id="KW-0548">Nucleotidyltransferase</keyword>
<keyword id="KW-1185">Reference proteome</keyword>
<keyword id="KW-0808">Transferase</keyword>
<feature type="chain" id="PRO_0000370151" description="8-amino-3,8-dideoxy-manno-octulosonate cytidylyltransferase">
    <location>
        <begin position="1"/>
        <end position="245"/>
    </location>
</feature>
<accession>A3QE24</accession>
<name>KDSB_SHELP</name>
<comment type="function">
    <text evidence="1">Activates KDO8N (a required 8-carbon sugar) for incorporation into bacterial lipopolysaccharide in the Shewanella genus.</text>
</comment>
<comment type="catalytic activity">
    <reaction evidence="1">
        <text>8-amino-3,8-dideoxy-alpha-D-manno-octulosonate + CTP = CMP-8-amino-3,8-dideoxy-alpha-D-manno-oct-2-ulosonate + diphosphate</text>
        <dbReference type="Rhea" id="RHEA:49284"/>
        <dbReference type="ChEBI" id="CHEBI:33019"/>
        <dbReference type="ChEBI" id="CHEBI:37563"/>
        <dbReference type="ChEBI" id="CHEBI:87091"/>
        <dbReference type="ChEBI" id="CHEBI:91089"/>
        <dbReference type="EC" id="2.7.7.90"/>
    </reaction>
</comment>
<comment type="pathway">
    <text evidence="1">Bacterial outer membrane biogenesis; lipopolysaccharide biosynthesis.</text>
</comment>
<comment type="subcellular location">
    <subcellularLocation>
        <location evidence="1">Cytoplasm</location>
    </subcellularLocation>
</comment>
<comment type="similarity">
    <text evidence="1">Belongs to the KdsB family.</text>
</comment>
<proteinExistence type="inferred from homology"/>
<reference key="1">
    <citation type="submission" date="2007-03" db="EMBL/GenBank/DDBJ databases">
        <title>Complete sequence of Shewanella loihica PV-4.</title>
        <authorList>
            <consortium name="US DOE Joint Genome Institute"/>
            <person name="Copeland A."/>
            <person name="Lucas S."/>
            <person name="Lapidus A."/>
            <person name="Barry K."/>
            <person name="Detter J.C."/>
            <person name="Glavina del Rio T."/>
            <person name="Hammon N."/>
            <person name="Israni S."/>
            <person name="Dalin E."/>
            <person name="Tice H."/>
            <person name="Pitluck S."/>
            <person name="Chain P."/>
            <person name="Malfatti S."/>
            <person name="Shin M."/>
            <person name="Vergez L."/>
            <person name="Schmutz J."/>
            <person name="Larimer F."/>
            <person name="Land M."/>
            <person name="Hauser L."/>
            <person name="Kyrpides N."/>
            <person name="Mikhailova N."/>
            <person name="Romine M.F."/>
            <person name="Serres G."/>
            <person name="Fredrickson J."/>
            <person name="Tiedje J."/>
            <person name="Richardson P."/>
        </authorList>
    </citation>
    <scope>NUCLEOTIDE SEQUENCE [LARGE SCALE GENOMIC DNA]</scope>
    <source>
        <strain>ATCC BAA-1088 / PV-4</strain>
    </source>
</reference>
<evidence type="ECO:0000255" key="1">
    <source>
        <dbReference type="HAMAP-Rule" id="MF_00057"/>
    </source>
</evidence>
<organism>
    <name type="scientific">Shewanella loihica (strain ATCC BAA-1088 / PV-4)</name>
    <dbReference type="NCBI Taxonomy" id="323850"/>
    <lineage>
        <taxon>Bacteria</taxon>
        <taxon>Pseudomonadati</taxon>
        <taxon>Pseudomonadota</taxon>
        <taxon>Gammaproteobacteria</taxon>
        <taxon>Alteromonadales</taxon>
        <taxon>Shewanellaceae</taxon>
        <taxon>Shewanella</taxon>
    </lineage>
</organism>
<protein>
    <recommendedName>
        <fullName evidence="1">8-amino-3,8-dideoxy-manno-octulosonate cytidylyltransferase</fullName>
        <ecNumber evidence="1">2.7.7.90</ecNumber>
    </recommendedName>
    <alternativeName>
        <fullName evidence="1">CMP-8-amino-3,8-dideoxy-manno-octulosonate synthase</fullName>
    </alternativeName>
</protein>
<dbReference type="EC" id="2.7.7.90" evidence="1"/>
<dbReference type="EMBL" id="CP000606">
    <property type="protein sequence ID" value="ABO23722.1"/>
    <property type="molecule type" value="Genomic_DNA"/>
</dbReference>
<dbReference type="RefSeq" id="WP_011865654.1">
    <property type="nucleotide sequence ID" value="NC_009092.1"/>
</dbReference>
<dbReference type="SMR" id="A3QE24"/>
<dbReference type="STRING" id="323850.Shew_1856"/>
<dbReference type="KEGG" id="slo:Shew_1856"/>
<dbReference type="eggNOG" id="COG1212">
    <property type="taxonomic scope" value="Bacteria"/>
</dbReference>
<dbReference type="HOGENOM" id="CLU_065038_0_1_6"/>
<dbReference type="OrthoDB" id="9815559at2"/>
<dbReference type="UniPathway" id="UPA00030"/>
<dbReference type="Proteomes" id="UP000001558">
    <property type="component" value="Chromosome"/>
</dbReference>
<dbReference type="GO" id="GO:0005829">
    <property type="term" value="C:cytosol"/>
    <property type="evidence" value="ECO:0007669"/>
    <property type="project" value="TreeGrafter"/>
</dbReference>
<dbReference type="GO" id="GO:0008690">
    <property type="term" value="F:3-deoxy-manno-octulosonate cytidylyltransferase activity"/>
    <property type="evidence" value="ECO:0007669"/>
    <property type="project" value="InterPro"/>
</dbReference>
<dbReference type="GO" id="GO:0009103">
    <property type="term" value="P:lipopolysaccharide biosynthetic process"/>
    <property type="evidence" value="ECO:0007669"/>
    <property type="project" value="UniProtKB-UniRule"/>
</dbReference>
<dbReference type="CDD" id="cd02517">
    <property type="entry name" value="CMP-KDO-Synthetase"/>
    <property type="match status" value="1"/>
</dbReference>
<dbReference type="FunFam" id="3.90.550.10:FF:000011">
    <property type="entry name" value="3-deoxy-manno-octulosonate cytidylyltransferase"/>
    <property type="match status" value="1"/>
</dbReference>
<dbReference type="Gene3D" id="3.90.550.10">
    <property type="entry name" value="Spore Coat Polysaccharide Biosynthesis Protein SpsA, Chain A"/>
    <property type="match status" value="1"/>
</dbReference>
<dbReference type="HAMAP" id="MF_00057">
    <property type="entry name" value="KdsB"/>
    <property type="match status" value="1"/>
</dbReference>
<dbReference type="InterPro" id="IPR003329">
    <property type="entry name" value="Cytidylyl_trans"/>
</dbReference>
<dbReference type="InterPro" id="IPR004528">
    <property type="entry name" value="KdsB"/>
</dbReference>
<dbReference type="InterPro" id="IPR029044">
    <property type="entry name" value="Nucleotide-diphossugar_trans"/>
</dbReference>
<dbReference type="NCBIfam" id="TIGR00466">
    <property type="entry name" value="kdsB"/>
    <property type="match status" value="1"/>
</dbReference>
<dbReference type="NCBIfam" id="NF003950">
    <property type="entry name" value="PRK05450.1-3"/>
    <property type="match status" value="1"/>
</dbReference>
<dbReference type="NCBIfam" id="NF003952">
    <property type="entry name" value="PRK05450.1-5"/>
    <property type="match status" value="1"/>
</dbReference>
<dbReference type="NCBIfam" id="NF009905">
    <property type="entry name" value="PRK13368.1"/>
    <property type="match status" value="1"/>
</dbReference>
<dbReference type="PANTHER" id="PTHR42866">
    <property type="entry name" value="3-DEOXY-MANNO-OCTULOSONATE CYTIDYLYLTRANSFERASE"/>
    <property type="match status" value="1"/>
</dbReference>
<dbReference type="PANTHER" id="PTHR42866:SF2">
    <property type="entry name" value="3-DEOXY-MANNO-OCTULOSONATE CYTIDYLYLTRANSFERASE, MITOCHONDRIAL"/>
    <property type="match status" value="1"/>
</dbReference>
<dbReference type="Pfam" id="PF02348">
    <property type="entry name" value="CTP_transf_3"/>
    <property type="match status" value="1"/>
</dbReference>
<dbReference type="SUPFAM" id="SSF53448">
    <property type="entry name" value="Nucleotide-diphospho-sugar transferases"/>
    <property type="match status" value="1"/>
</dbReference>